<keyword id="KW-0007">Acetylation</keyword>
<keyword id="KW-0202">Cytokine</keyword>
<keyword id="KW-0963">Cytoplasm</keyword>
<keyword id="KW-0312">Gluconeogenesis</keyword>
<keyword id="KW-0324">Glycolysis</keyword>
<keyword id="KW-0379">Hydroxylation</keyword>
<keyword id="KW-0413">Isomerase</keyword>
<keyword id="KW-0597">Phosphoprotein</keyword>
<keyword id="KW-1185">Reference proteome</keyword>
<keyword id="KW-0964">Secreted</keyword>
<keyword id="KW-0832">Ubl conjugation</keyword>
<comment type="function">
    <text evidence="2 3">In the cytoplasm, catalyzes the conversion of glucose-6-phosphate to fructose-6-phosphate, the second step in glycolysis, and the reverse reaction during gluconeogenesis (By similarity). Besides it's role as a glycolytic enzyme, also acts as a secreted cytokine: acts as an angiogenic factor (AMF) that stimulates endothelial cell motility. Acts as a neurotrophic factor, neuroleukin, for spinal and sensory neurons. It is secreted by lectin-stimulated T-cells and induces immunoglobulin secretion (By similarity).</text>
</comment>
<comment type="catalytic activity">
    <reaction evidence="2">
        <text>alpha-D-glucose 6-phosphate = beta-D-fructose 6-phosphate</text>
        <dbReference type="Rhea" id="RHEA:11816"/>
        <dbReference type="ChEBI" id="CHEBI:57634"/>
        <dbReference type="ChEBI" id="CHEBI:58225"/>
        <dbReference type="EC" id="5.3.1.9"/>
    </reaction>
</comment>
<comment type="pathway">
    <text evidence="2">Carbohydrate degradation; glycolysis; D-glyceraldehyde 3-phosphate and glycerone phosphate from D-glucose: step 2/4.</text>
</comment>
<comment type="subunit">
    <text evidence="2">Homodimer; in the catalytically active form. Monomer in the secreted form.</text>
</comment>
<comment type="subcellular location">
    <subcellularLocation>
        <location evidence="2">Cytoplasm</location>
    </subcellularLocation>
    <subcellularLocation>
        <location evidence="2">Secreted</location>
    </subcellularLocation>
</comment>
<comment type="PTM">
    <text evidence="2">Phosphorylation at Ser-185 by CK2 has been shown to decrease enzymatic activity and may contribute to secretion by a non-classical secretory pathway.</text>
</comment>
<comment type="PTM">
    <text evidence="2">ISGylated.</text>
</comment>
<comment type="similarity">
    <text evidence="5">Belongs to the GPI family.</text>
</comment>
<name>G6PI_PONAB</name>
<evidence type="ECO:0000250" key="1"/>
<evidence type="ECO:0000250" key="2">
    <source>
        <dbReference type="UniProtKB" id="P06744"/>
    </source>
</evidence>
<evidence type="ECO:0000250" key="3">
    <source>
        <dbReference type="UniProtKB" id="P06745"/>
    </source>
</evidence>
<evidence type="ECO:0000250" key="4">
    <source>
        <dbReference type="UniProtKB" id="Q6P6V0"/>
    </source>
</evidence>
<evidence type="ECO:0000305" key="5"/>
<dbReference type="EC" id="5.3.1.9" evidence="3"/>
<dbReference type="EMBL" id="CR861307">
    <property type="protein sequence ID" value="CAH93373.1"/>
    <property type="molecule type" value="mRNA"/>
</dbReference>
<dbReference type="RefSeq" id="NP_001126984.1">
    <property type="nucleotide sequence ID" value="NM_001133512.1"/>
</dbReference>
<dbReference type="SMR" id="Q5R4E3"/>
<dbReference type="FunCoup" id="Q5R4E3">
    <property type="interactions" value="1577"/>
</dbReference>
<dbReference type="STRING" id="9601.ENSPPYP00000011012"/>
<dbReference type="GeneID" id="100174006"/>
<dbReference type="KEGG" id="pon:100174006"/>
<dbReference type="CTD" id="2821"/>
<dbReference type="eggNOG" id="KOG2446">
    <property type="taxonomic scope" value="Eukaryota"/>
</dbReference>
<dbReference type="InParanoid" id="Q5R4E3"/>
<dbReference type="OrthoDB" id="5831190at2759"/>
<dbReference type="UniPathway" id="UPA00109">
    <property type="reaction ID" value="UER00181"/>
</dbReference>
<dbReference type="Proteomes" id="UP000001595">
    <property type="component" value="Unplaced"/>
</dbReference>
<dbReference type="GO" id="GO:0005829">
    <property type="term" value="C:cytosol"/>
    <property type="evidence" value="ECO:0007669"/>
    <property type="project" value="TreeGrafter"/>
</dbReference>
<dbReference type="GO" id="GO:0005615">
    <property type="term" value="C:extracellular space"/>
    <property type="evidence" value="ECO:0007669"/>
    <property type="project" value="UniProtKB-KW"/>
</dbReference>
<dbReference type="GO" id="GO:0097367">
    <property type="term" value="F:carbohydrate derivative binding"/>
    <property type="evidence" value="ECO:0007669"/>
    <property type="project" value="InterPro"/>
</dbReference>
<dbReference type="GO" id="GO:0005125">
    <property type="term" value="F:cytokine activity"/>
    <property type="evidence" value="ECO:0007669"/>
    <property type="project" value="UniProtKB-KW"/>
</dbReference>
<dbReference type="GO" id="GO:0004347">
    <property type="term" value="F:glucose-6-phosphate isomerase activity"/>
    <property type="evidence" value="ECO:0000250"/>
    <property type="project" value="UniProtKB"/>
</dbReference>
<dbReference type="GO" id="GO:0048029">
    <property type="term" value="F:monosaccharide binding"/>
    <property type="evidence" value="ECO:0007669"/>
    <property type="project" value="TreeGrafter"/>
</dbReference>
<dbReference type="GO" id="GO:0006094">
    <property type="term" value="P:gluconeogenesis"/>
    <property type="evidence" value="ECO:0007669"/>
    <property type="project" value="UniProtKB-KW"/>
</dbReference>
<dbReference type="GO" id="GO:0051156">
    <property type="term" value="P:glucose 6-phosphate metabolic process"/>
    <property type="evidence" value="ECO:0000250"/>
    <property type="project" value="UniProtKB"/>
</dbReference>
<dbReference type="GO" id="GO:0006096">
    <property type="term" value="P:glycolytic process"/>
    <property type="evidence" value="ECO:0007669"/>
    <property type="project" value="UniProtKB-UniPathway"/>
</dbReference>
<dbReference type="CDD" id="cd05015">
    <property type="entry name" value="SIS_PGI_1"/>
    <property type="match status" value="1"/>
</dbReference>
<dbReference type="CDD" id="cd05016">
    <property type="entry name" value="SIS_PGI_2"/>
    <property type="match status" value="1"/>
</dbReference>
<dbReference type="FunFam" id="1.10.1390.10:FF:000001">
    <property type="entry name" value="Glucose-6-phosphate isomerase"/>
    <property type="match status" value="1"/>
</dbReference>
<dbReference type="FunFam" id="3.40.50.10490:FF:000004">
    <property type="entry name" value="Glucose-6-phosphate isomerase"/>
    <property type="match status" value="1"/>
</dbReference>
<dbReference type="FunFam" id="3.40.50.10490:FF:000093">
    <property type="entry name" value="Glucose-6-phosphate isomerase"/>
    <property type="match status" value="1"/>
</dbReference>
<dbReference type="Gene3D" id="1.10.1390.10">
    <property type="match status" value="1"/>
</dbReference>
<dbReference type="Gene3D" id="3.40.50.10490">
    <property type="entry name" value="Glucose-6-phosphate isomerase like protein, domain 1"/>
    <property type="match status" value="2"/>
</dbReference>
<dbReference type="HAMAP" id="MF_00473">
    <property type="entry name" value="G6P_isomerase"/>
    <property type="match status" value="1"/>
</dbReference>
<dbReference type="InterPro" id="IPR001672">
    <property type="entry name" value="G6P_Isomerase"/>
</dbReference>
<dbReference type="InterPro" id="IPR023096">
    <property type="entry name" value="G6P_Isomerase_C"/>
</dbReference>
<dbReference type="InterPro" id="IPR018189">
    <property type="entry name" value="Phosphoglucose_isomerase_CS"/>
</dbReference>
<dbReference type="InterPro" id="IPR046348">
    <property type="entry name" value="SIS_dom_sf"/>
</dbReference>
<dbReference type="InterPro" id="IPR035476">
    <property type="entry name" value="SIS_PGI_1"/>
</dbReference>
<dbReference type="InterPro" id="IPR035482">
    <property type="entry name" value="SIS_PGI_2"/>
</dbReference>
<dbReference type="NCBIfam" id="NF001211">
    <property type="entry name" value="PRK00179.1"/>
    <property type="match status" value="1"/>
</dbReference>
<dbReference type="PANTHER" id="PTHR11469">
    <property type="entry name" value="GLUCOSE-6-PHOSPHATE ISOMERASE"/>
    <property type="match status" value="1"/>
</dbReference>
<dbReference type="PANTHER" id="PTHR11469:SF1">
    <property type="entry name" value="GLUCOSE-6-PHOSPHATE ISOMERASE"/>
    <property type="match status" value="1"/>
</dbReference>
<dbReference type="Pfam" id="PF00342">
    <property type="entry name" value="PGI"/>
    <property type="match status" value="1"/>
</dbReference>
<dbReference type="PRINTS" id="PR00662">
    <property type="entry name" value="G6PISOMERASE"/>
</dbReference>
<dbReference type="SUPFAM" id="SSF53697">
    <property type="entry name" value="SIS domain"/>
    <property type="match status" value="1"/>
</dbReference>
<dbReference type="PROSITE" id="PS00765">
    <property type="entry name" value="P_GLUCOSE_ISOMERASE_1"/>
    <property type="match status" value="1"/>
</dbReference>
<dbReference type="PROSITE" id="PS00174">
    <property type="entry name" value="P_GLUCOSE_ISOMERASE_2"/>
    <property type="match status" value="1"/>
</dbReference>
<dbReference type="PROSITE" id="PS51463">
    <property type="entry name" value="P_GLUCOSE_ISOMERASE_3"/>
    <property type="match status" value="1"/>
</dbReference>
<accession>Q5R4E3</accession>
<protein>
    <recommendedName>
        <fullName evidence="2">Glucose-6-phosphate isomerase</fullName>
        <shortName evidence="2">GPI</shortName>
        <ecNumber evidence="3">5.3.1.9</ecNumber>
    </recommendedName>
    <alternativeName>
        <fullName evidence="2">Autocrine motility factor</fullName>
        <shortName evidence="2">AMF</shortName>
    </alternativeName>
    <alternativeName>
        <fullName evidence="2">Neuroleukin</fullName>
        <shortName evidence="2">NLK</shortName>
    </alternativeName>
    <alternativeName>
        <fullName evidence="2">Phosphoglucose isomerase</fullName>
        <shortName evidence="2">PGI</shortName>
    </alternativeName>
    <alternativeName>
        <fullName>Phosphohexose isomerase</fullName>
        <shortName evidence="2">PHI</shortName>
    </alternativeName>
</protein>
<gene>
    <name evidence="2" type="primary">GPI</name>
</gene>
<sequence length="558" mass="63018">MAALTRDPQFQKLQQWYREHGSELNLRRLFDANKDRFNHFSLTLNTNHGHILVDYSKNLVTEDVMRMLVDLAKSRGVEAARERMFNGEKINYTEGRAVLHVALRNRSNTPILVDGKDVMPEVNKVLDKMKSFCQRVRSGDWKGYTGKTITDIINIGIGGSDLGPLMVTEALKPYSSGGPRVWYVSNIDGTHIAKTLAQLNPESSVSIIASKTFTTQETITNAETAKEWFLQTAKDPSAVAKHFVALSTNTTKVKEFGIDPQNMFEFWDWVGGRYSLWSAIGLSIALHVGFDNFEQLLSGAHWMDQHFRTTPLEKNAPVLLALLGIWYINCFGCETHAMLPYDQYLHRFAAYFQQGDMESNGKYITKSGTRVDHQTGPIVWGEPGTNGQHAFYQLIHQGTKMIPCDFLIPVQTQHPIRKGLHHKVLLANFLAQTEALMRGKSTEEARKELQAAGKSPEDLERLLPHKVFEGNRPTNSIVFTKLTPFMLGALVAMYEHKIFVQGIIWDINSFDQWGVELGKQLAKKIEPELDGSAQVTSHDASTNGLINFIKQQREARIQ</sequence>
<proteinExistence type="evidence at transcript level"/>
<feature type="initiator methionine" description="Removed" evidence="2">
    <location>
        <position position="1"/>
    </location>
</feature>
<feature type="chain" id="PRO_0000180539" description="Glucose-6-phosphate isomerase">
    <location>
        <begin position="2"/>
        <end position="558"/>
    </location>
</feature>
<feature type="active site" description="Proton donor" evidence="3">
    <location>
        <position position="358"/>
    </location>
</feature>
<feature type="active site" evidence="3">
    <location>
        <position position="389"/>
    </location>
</feature>
<feature type="active site" evidence="3">
    <location>
        <position position="519"/>
    </location>
</feature>
<feature type="binding site" evidence="3">
    <location>
        <begin position="159"/>
        <end position="160"/>
    </location>
    <ligand>
        <name>D-glucose 6-phosphate</name>
        <dbReference type="ChEBI" id="CHEBI:61548"/>
    </ligand>
</feature>
<feature type="binding site" evidence="3">
    <location>
        <begin position="210"/>
        <end position="215"/>
    </location>
    <ligand>
        <name>D-glucose 6-phosphate</name>
        <dbReference type="ChEBI" id="CHEBI:61548"/>
    </ligand>
</feature>
<feature type="binding site" evidence="3">
    <location>
        <position position="354"/>
    </location>
    <ligand>
        <name>D-glucose 6-phosphate</name>
        <dbReference type="ChEBI" id="CHEBI:61548"/>
    </ligand>
</feature>
<feature type="binding site" evidence="3">
    <location>
        <position position="358"/>
    </location>
    <ligand>
        <name>D-glucose 6-phosphate</name>
        <dbReference type="ChEBI" id="CHEBI:61548"/>
    </ligand>
</feature>
<feature type="binding site" evidence="3">
    <location>
        <position position="389"/>
    </location>
    <ligand>
        <name>D-glucose 6-phosphate</name>
        <dbReference type="ChEBI" id="CHEBI:61548"/>
    </ligand>
</feature>
<feature type="binding site" evidence="3">
    <location>
        <position position="519"/>
    </location>
    <ligand>
        <name>D-glucose 6-phosphate</name>
        <dbReference type="ChEBI" id="CHEBI:61548"/>
    </ligand>
</feature>
<feature type="modified residue" description="N-acetylalanine" evidence="2">
    <location>
        <position position="2"/>
    </location>
</feature>
<feature type="modified residue" description="N6-acetyllysine" evidence="2">
    <location>
        <position position="12"/>
    </location>
</feature>
<feature type="modified residue" description="N6-(2-hydroxyisobutyryl)lysine" evidence="2">
    <location>
        <position position="34"/>
    </location>
</feature>
<feature type="modified residue" description="Phosphoserine" evidence="2">
    <location>
        <position position="107"/>
    </location>
</feature>
<feature type="modified residue" description="Phosphothreonine" evidence="2">
    <location>
        <position position="109"/>
    </location>
</feature>
<feature type="modified residue" description="N6-acetyllysine" evidence="2">
    <location>
        <position position="142"/>
    </location>
</feature>
<feature type="modified residue" description="Phosphoserine; by CK2" evidence="2">
    <location>
        <position position="185"/>
    </location>
</feature>
<feature type="modified residue" description="Phosphothreonine" evidence="4">
    <location>
        <position position="250"/>
    </location>
</feature>
<feature type="modified residue" description="N6-acetyllysine; alternate" evidence="3">
    <location>
        <position position="454"/>
    </location>
</feature>
<feature type="modified residue" description="N6-malonyllysine; alternate" evidence="1">
    <location>
        <position position="454"/>
    </location>
</feature>
<feature type="modified residue" description="N6-succinyllysine; alternate" evidence="3">
    <location>
        <position position="454"/>
    </location>
</feature>
<feature type="modified residue" description="Phosphoserine" evidence="2">
    <location>
        <position position="455"/>
    </location>
</feature>
<reference key="1">
    <citation type="submission" date="2004-11" db="EMBL/GenBank/DDBJ databases">
        <authorList>
            <consortium name="The German cDNA consortium"/>
        </authorList>
    </citation>
    <scope>NUCLEOTIDE SEQUENCE [LARGE SCALE MRNA]</scope>
    <source>
        <tissue>Brain cortex</tissue>
    </source>
</reference>
<organism>
    <name type="scientific">Pongo abelii</name>
    <name type="common">Sumatran orangutan</name>
    <name type="synonym">Pongo pygmaeus abelii</name>
    <dbReference type="NCBI Taxonomy" id="9601"/>
    <lineage>
        <taxon>Eukaryota</taxon>
        <taxon>Metazoa</taxon>
        <taxon>Chordata</taxon>
        <taxon>Craniata</taxon>
        <taxon>Vertebrata</taxon>
        <taxon>Euteleostomi</taxon>
        <taxon>Mammalia</taxon>
        <taxon>Eutheria</taxon>
        <taxon>Euarchontoglires</taxon>
        <taxon>Primates</taxon>
        <taxon>Haplorrhini</taxon>
        <taxon>Catarrhini</taxon>
        <taxon>Hominidae</taxon>
        <taxon>Pongo</taxon>
    </lineage>
</organism>